<reference key="1">
    <citation type="submission" date="2007-11" db="EMBL/GenBank/DDBJ databases">
        <title>Complete sequence of Delftia acidovorans DSM 14801 / SPH-1.</title>
        <authorList>
            <person name="Copeland A."/>
            <person name="Lucas S."/>
            <person name="Lapidus A."/>
            <person name="Barry K."/>
            <person name="Glavina del Rio T."/>
            <person name="Dalin E."/>
            <person name="Tice H."/>
            <person name="Pitluck S."/>
            <person name="Lowry S."/>
            <person name="Clum A."/>
            <person name="Schmutz J."/>
            <person name="Larimer F."/>
            <person name="Land M."/>
            <person name="Hauser L."/>
            <person name="Kyrpides N."/>
            <person name="Kim E."/>
            <person name="Schleheck D."/>
            <person name="Richardson P."/>
        </authorList>
    </citation>
    <scope>NUCLEOTIDE SEQUENCE [LARGE SCALE GENOMIC DNA]</scope>
    <source>
        <strain>DSM 14801 / SPH-1</strain>
    </source>
</reference>
<comment type="function">
    <text evidence="1">Catalyzes the conversion of glucosamine-6-phosphate to glucosamine-1-phosphate.</text>
</comment>
<comment type="catalytic activity">
    <reaction evidence="1">
        <text>alpha-D-glucosamine 1-phosphate = D-glucosamine 6-phosphate</text>
        <dbReference type="Rhea" id="RHEA:23424"/>
        <dbReference type="ChEBI" id="CHEBI:58516"/>
        <dbReference type="ChEBI" id="CHEBI:58725"/>
        <dbReference type="EC" id="5.4.2.10"/>
    </reaction>
</comment>
<comment type="cofactor">
    <cofactor evidence="1">
        <name>Mg(2+)</name>
        <dbReference type="ChEBI" id="CHEBI:18420"/>
    </cofactor>
    <text evidence="1">Binds 1 Mg(2+) ion per subunit.</text>
</comment>
<comment type="PTM">
    <text evidence="1">Activated by phosphorylation.</text>
</comment>
<comment type="similarity">
    <text evidence="1">Belongs to the phosphohexose mutase family.</text>
</comment>
<dbReference type="EC" id="5.4.2.10" evidence="1"/>
<dbReference type="EMBL" id="CP000884">
    <property type="protein sequence ID" value="ABX37552.1"/>
    <property type="molecule type" value="Genomic_DNA"/>
</dbReference>
<dbReference type="RefSeq" id="WP_012206722.1">
    <property type="nucleotide sequence ID" value="NC_010002.1"/>
</dbReference>
<dbReference type="SMR" id="A9BMK7"/>
<dbReference type="STRING" id="398578.Daci_4923"/>
<dbReference type="GeneID" id="24116122"/>
<dbReference type="KEGG" id="dac:Daci_4923"/>
<dbReference type="eggNOG" id="COG1109">
    <property type="taxonomic scope" value="Bacteria"/>
</dbReference>
<dbReference type="HOGENOM" id="CLU_016950_7_0_4"/>
<dbReference type="Proteomes" id="UP000000784">
    <property type="component" value="Chromosome"/>
</dbReference>
<dbReference type="GO" id="GO:0005829">
    <property type="term" value="C:cytosol"/>
    <property type="evidence" value="ECO:0007669"/>
    <property type="project" value="TreeGrafter"/>
</dbReference>
<dbReference type="GO" id="GO:0000287">
    <property type="term" value="F:magnesium ion binding"/>
    <property type="evidence" value="ECO:0007669"/>
    <property type="project" value="UniProtKB-UniRule"/>
</dbReference>
<dbReference type="GO" id="GO:0008966">
    <property type="term" value="F:phosphoglucosamine mutase activity"/>
    <property type="evidence" value="ECO:0007669"/>
    <property type="project" value="UniProtKB-UniRule"/>
</dbReference>
<dbReference type="GO" id="GO:0004615">
    <property type="term" value="F:phosphomannomutase activity"/>
    <property type="evidence" value="ECO:0007669"/>
    <property type="project" value="TreeGrafter"/>
</dbReference>
<dbReference type="GO" id="GO:0005975">
    <property type="term" value="P:carbohydrate metabolic process"/>
    <property type="evidence" value="ECO:0007669"/>
    <property type="project" value="InterPro"/>
</dbReference>
<dbReference type="GO" id="GO:0009252">
    <property type="term" value="P:peptidoglycan biosynthetic process"/>
    <property type="evidence" value="ECO:0007669"/>
    <property type="project" value="TreeGrafter"/>
</dbReference>
<dbReference type="GO" id="GO:0006048">
    <property type="term" value="P:UDP-N-acetylglucosamine biosynthetic process"/>
    <property type="evidence" value="ECO:0007669"/>
    <property type="project" value="TreeGrafter"/>
</dbReference>
<dbReference type="CDD" id="cd05802">
    <property type="entry name" value="GlmM"/>
    <property type="match status" value="1"/>
</dbReference>
<dbReference type="FunFam" id="3.30.310.50:FF:000001">
    <property type="entry name" value="Phosphoglucosamine mutase"/>
    <property type="match status" value="1"/>
</dbReference>
<dbReference type="FunFam" id="3.40.120.10:FF:000001">
    <property type="entry name" value="Phosphoglucosamine mutase"/>
    <property type="match status" value="1"/>
</dbReference>
<dbReference type="FunFam" id="3.40.120.10:FF:000003">
    <property type="entry name" value="Phosphoglucosamine mutase"/>
    <property type="match status" value="1"/>
</dbReference>
<dbReference type="Gene3D" id="3.40.120.10">
    <property type="entry name" value="Alpha-D-Glucose-1,6-Bisphosphate, subunit A, domain 3"/>
    <property type="match status" value="3"/>
</dbReference>
<dbReference type="Gene3D" id="3.30.310.50">
    <property type="entry name" value="Alpha-D-phosphohexomutase, C-terminal domain"/>
    <property type="match status" value="1"/>
</dbReference>
<dbReference type="HAMAP" id="MF_01554_B">
    <property type="entry name" value="GlmM_B"/>
    <property type="match status" value="1"/>
</dbReference>
<dbReference type="InterPro" id="IPR005844">
    <property type="entry name" value="A-D-PHexomutase_a/b/a-I"/>
</dbReference>
<dbReference type="InterPro" id="IPR016055">
    <property type="entry name" value="A-D-PHexomutase_a/b/a-I/II/III"/>
</dbReference>
<dbReference type="InterPro" id="IPR005845">
    <property type="entry name" value="A-D-PHexomutase_a/b/a-II"/>
</dbReference>
<dbReference type="InterPro" id="IPR005846">
    <property type="entry name" value="A-D-PHexomutase_a/b/a-III"/>
</dbReference>
<dbReference type="InterPro" id="IPR005843">
    <property type="entry name" value="A-D-PHexomutase_C"/>
</dbReference>
<dbReference type="InterPro" id="IPR036900">
    <property type="entry name" value="A-D-PHexomutase_C_sf"/>
</dbReference>
<dbReference type="InterPro" id="IPR016066">
    <property type="entry name" value="A-D-PHexomutase_CS"/>
</dbReference>
<dbReference type="InterPro" id="IPR005841">
    <property type="entry name" value="Alpha-D-phosphohexomutase_SF"/>
</dbReference>
<dbReference type="InterPro" id="IPR006352">
    <property type="entry name" value="GlmM_bact"/>
</dbReference>
<dbReference type="InterPro" id="IPR050060">
    <property type="entry name" value="Phosphoglucosamine_mutase"/>
</dbReference>
<dbReference type="NCBIfam" id="TIGR01455">
    <property type="entry name" value="glmM"/>
    <property type="match status" value="1"/>
</dbReference>
<dbReference type="NCBIfam" id="NF008139">
    <property type="entry name" value="PRK10887.1"/>
    <property type="match status" value="1"/>
</dbReference>
<dbReference type="PANTHER" id="PTHR42946:SF1">
    <property type="entry name" value="PHOSPHOGLUCOMUTASE (ALPHA-D-GLUCOSE-1,6-BISPHOSPHATE-DEPENDENT)"/>
    <property type="match status" value="1"/>
</dbReference>
<dbReference type="PANTHER" id="PTHR42946">
    <property type="entry name" value="PHOSPHOHEXOSE MUTASE"/>
    <property type="match status" value="1"/>
</dbReference>
<dbReference type="Pfam" id="PF02878">
    <property type="entry name" value="PGM_PMM_I"/>
    <property type="match status" value="1"/>
</dbReference>
<dbReference type="Pfam" id="PF02879">
    <property type="entry name" value="PGM_PMM_II"/>
    <property type="match status" value="1"/>
</dbReference>
<dbReference type="Pfam" id="PF02880">
    <property type="entry name" value="PGM_PMM_III"/>
    <property type="match status" value="1"/>
</dbReference>
<dbReference type="Pfam" id="PF00408">
    <property type="entry name" value="PGM_PMM_IV"/>
    <property type="match status" value="1"/>
</dbReference>
<dbReference type="PRINTS" id="PR00509">
    <property type="entry name" value="PGMPMM"/>
</dbReference>
<dbReference type="SUPFAM" id="SSF55957">
    <property type="entry name" value="Phosphoglucomutase, C-terminal domain"/>
    <property type="match status" value="1"/>
</dbReference>
<dbReference type="SUPFAM" id="SSF53738">
    <property type="entry name" value="Phosphoglucomutase, first 3 domains"/>
    <property type="match status" value="3"/>
</dbReference>
<dbReference type="PROSITE" id="PS00710">
    <property type="entry name" value="PGM_PMM"/>
    <property type="match status" value="1"/>
</dbReference>
<evidence type="ECO:0000255" key="1">
    <source>
        <dbReference type="HAMAP-Rule" id="MF_01554"/>
    </source>
</evidence>
<gene>
    <name evidence="1" type="primary">glmM</name>
    <name type="ordered locus">Daci_4923</name>
</gene>
<protein>
    <recommendedName>
        <fullName evidence="1">Phosphoglucosamine mutase</fullName>
        <ecNumber evidence="1">5.4.2.10</ecNumber>
    </recommendedName>
</protein>
<organism>
    <name type="scientific">Delftia acidovorans (strain DSM 14801 / SPH-1)</name>
    <dbReference type="NCBI Taxonomy" id="398578"/>
    <lineage>
        <taxon>Bacteria</taxon>
        <taxon>Pseudomonadati</taxon>
        <taxon>Pseudomonadota</taxon>
        <taxon>Betaproteobacteria</taxon>
        <taxon>Burkholderiales</taxon>
        <taxon>Comamonadaceae</taxon>
        <taxon>Delftia</taxon>
    </lineage>
</organism>
<sequence>MARTYFGTDGIRGLVGRSPITPDFALRLAHAVGRVLRRKEARPMVLIGKDTRISGYMLESALESGFNSAGVDVMLLGPLPTPGVAYLTRAQRASLGVVISASHNPYYDNGIKFFSAQGTKLPDAWEEEVEQALTEDPVWADSAALGKARRLEDAAGRYIEFCKSTFDHALTLKGVKIVVDAAHGAAYQIAPKVFHELGADVVAIGCAPDGLNINEDVGATHPEALVLAVRANKADFGVALDGDADRLLLVDAAGRLYNGDELLYLLAADRLARGEAVPGAVGTLMTNMAVEVALKSQGVGFVRAKVGDRYVLEELHRQGWTLGGEGSGHLLALDKHTTGDGLVSALQVLQACVRSGKSLSQWLSSVQLFPQVLLNVRLQPGQDWKRNTQLEEATEAVKAELGDTGRVLIRASGTEPLLRVMVEARDGDQASRCAERLASVAKNSPAA</sequence>
<keyword id="KW-0413">Isomerase</keyword>
<keyword id="KW-0460">Magnesium</keyword>
<keyword id="KW-0479">Metal-binding</keyword>
<keyword id="KW-0597">Phosphoprotein</keyword>
<keyword id="KW-1185">Reference proteome</keyword>
<proteinExistence type="inferred from homology"/>
<accession>A9BMK7</accession>
<feature type="chain" id="PRO_1000201085" description="Phosphoglucosamine mutase">
    <location>
        <begin position="1"/>
        <end position="447"/>
    </location>
</feature>
<feature type="active site" description="Phosphoserine intermediate" evidence="1">
    <location>
        <position position="102"/>
    </location>
</feature>
<feature type="binding site" description="via phosphate group" evidence="1">
    <location>
        <position position="102"/>
    </location>
    <ligand>
        <name>Mg(2+)</name>
        <dbReference type="ChEBI" id="CHEBI:18420"/>
    </ligand>
</feature>
<feature type="binding site" evidence="1">
    <location>
        <position position="241"/>
    </location>
    <ligand>
        <name>Mg(2+)</name>
        <dbReference type="ChEBI" id="CHEBI:18420"/>
    </ligand>
</feature>
<feature type="binding site" evidence="1">
    <location>
        <position position="243"/>
    </location>
    <ligand>
        <name>Mg(2+)</name>
        <dbReference type="ChEBI" id="CHEBI:18420"/>
    </ligand>
</feature>
<feature type="binding site" evidence="1">
    <location>
        <position position="245"/>
    </location>
    <ligand>
        <name>Mg(2+)</name>
        <dbReference type="ChEBI" id="CHEBI:18420"/>
    </ligand>
</feature>
<feature type="modified residue" description="Phosphoserine" evidence="1">
    <location>
        <position position="102"/>
    </location>
</feature>
<name>GLMM_DELAS</name>